<keyword id="KW-0963">Cytoplasm</keyword>
<keyword id="KW-0456">Lyase</keyword>
<keyword id="KW-0670">Pyruvate</keyword>
<keyword id="KW-0831">Ubiquinone biosynthesis</keyword>
<proteinExistence type="inferred from homology"/>
<organism>
    <name type="scientific">Escherichia coli (strain ATCC 8739 / DSM 1576 / NBRC 3972 / NCIMB 8545 / WDCM 00012 / Crooks)</name>
    <dbReference type="NCBI Taxonomy" id="481805"/>
    <lineage>
        <taxon>Bacteria</taxon>
        <taxon>Pseudomonadati</taxon>
        <taxon>Pseudomonadota</taxon>
        <taxon>Gammaproteobacteria</taxon>
        <taxon>Enterobacterales</taxon>
        <taxon>Enterobacteriaceae</taxon>
        <taxon>Escherichia</taxon>
    </lineage>
</organism>
<sequence length="165" mass="18821">MSHPALTQLRALRYFKEIPALDPQLLDWLLLEDSMTKRFEQQGKTVSVTMIREGFVEQNEIPEELPLLPKESRYWLREILLCADGEPWLAGRTVVPVSTLSGPELALQKLGKTPLGRYLFTSSTLTRDFIEIGRDAGLWGRRSRLRLSGKPLLLTELFLPASPLY</sequence>
<dbReference type="EC" id="4.1.3.40" evidence="1"/>
<dbReference type="EMBL" id="CP000946">
    <property type="protein sequence ID" value="ACA79590.1"/>
    <property type="molecule type" value="Genomic_DNA"/>
</dbReference>
<dbReference type="RefSeq" id="WP_001295693.1">
    <property type="nucleotide sequence ID" value="NZ_MTFT01000033.1"/>
</dbReference>
<dbReference type="SMR" id="B1IUL3"/>
<dbReference type="KEGG" id="ecl:EcolC_3989"/>
<dbReference type="HOGENOM" id="CLU_096824_1_0_6"/>
<dbReference type="UniPathway" id="UPA00232"/>
<dbReference type="GO" id="GO:0005829">
    <property type="term" value="C:cytosol"/>
    <property type="evidence" value="ECO:0007669"/>
    <property type="project" value="TreeGrafter"/>
</dbReference>
<dbReference type="GO" id="GO:0008813">
    <property type="term" value="F:chorismate lyase activity"/>
    <property type="evidence" value="ECO:0007669"/>
    <property type="project" value="UniProtKB-UniRule"/>
</dbReference>
<dbReference type="GO" id="GO:0042866">
    <property type="term" value="P:pyruvate biosynthetic process"/>
    <property type="evidence" value="ECO:0007669"/>
    <property type="project" value="UniProtKB-UniRule"/>
</dbReference>
<dbReference type="GO" id="GO:0006744">
    <property type="term" value="P:ubiquinone biosynthetic process"/>
    <property type="evidence" value="ECO:0007669"/>
    <property type="project" value="UniProtKB-UniRule"/>
</dbReference>
<dbReference type="FunFam" id="3.40.1410.10:FF:000002">
    <property type="entry name" value="Chorismate pyruvate-lyase"/>
    <property type="match status" value="1"/>
</dbReference>
<dbReference type="Gene3D" id="3.40.1410.10">
    <property type="entry name" value="Chorismate lyase-like"/>
    <property type="match status" value="1"/>
</dbReference>
<dbReference type="HAMAP" id="MF_01632">
    <property type="entry name" value="UbiC"/>
    <property type="match status" value="1"/>
</dbReference>
<dbReference type="InterPro" id="IPR007440">
    <property type="entry name" value="Chorismate--pyruvate_lyase"/>
</dbReference>
<dbReference type="InterPro" id="IPR028978">
    <property type="entry name" value="Chorismate_lyase_/UTRA_dom_sf"/>
</dbReference>
<dbReference type="NCBIfam" id="NF008656">
    <property type="entry name" value="PRK11655.1"/>
    <property type="match status" value="1"/>
</dbReference>
<dbReference type="PANTHER" id="PTHR38683">
    <property type="entry name" value="CHORISMATE PYRUVATE-LYASE"/>
    <property type="match status" value="1"/>
</dbReference>
<dbReference type="PANTHER" id="PTHR38683:SF1">
    <property type="entry name" value="CHORISMATE PYRUVATE-LYASE"/>
    <property type="match status" value="1"/>
</dbReference>
<dbReference type="Pfam" id="PF04345">
    <property type="entry name" value="Chor_lyase"/>
    <property type="match status" value="1"/>
</dbReference>
<dbReference type="SUPFAM" id="SSF64288">
    <property type="entry name" value="Chorismate lyase-like"/>
    <property type="match status" value="1"/>
</dbReference>
<protein>
    <recommendedName>
        <fullName evidence="1">Chorismate pyruvate-lyase</fullName>
        <shortName evidence="1">CL</shortName>
        <shortName evidence="1">CPL</shortName>
        <ecNumber evidence="1">4.1.3.40</ecNumber>
    </recommendedName>
</protein>
<comment type="function">
    <text evidence="1">Removes the pyruvyl group from chorismate, with concomitant aromatization of the ring, to provide 4-hydroxybenzoate (4HB) for the ubiquinone pathway.</text>
</comment>
<comment type="catalytic activity">
    <reaction evidence="1">
        <text>chorismate = 4-hydroxybenzoate + pyruvate</text>
        <dbReference type="Rhea" id="RHEA:16505"/>
        <dbReference type="ChEBI" id="CHEBI:15361"/>
        <dbReference type="ChEBI" id="CHEBI:17879"/>
        <dbReference type="ChEBI" id="CHEBI:29748"/>
        <dbReference type="EC" id="4.1.3.40"/>
    </reaction>
</comment>
<comment type="pathway">
    <text evidence="1">Cofactor biosynthesis; ubiquinone biosynthesis.</text>
</comment>
<comment type="subunit">
    <text evidence="1">Monomer.</text>
</comment>
<comment type="subcellular location">
    <subcellularLocation>
        <location evidence="1">Cytoplasm</location>
    </subcellularLocation>
</comment>
<comment type="similarity">
    <text evidence="1">Belongs to the UbiC family.</text>
</comment>
<reference key="1">
    <citation type="submission" date="2008-02" db="EMBL/GenBank/DDBJ databases">
        <title>Complete sequence of Escherichia coli C str. ATCC 8739.</title>
        <authorList>
            <person name="Copeland A."/>
            <person name="Lucas S."/>
            <person name="Lapidus A."/>
            <person name="Glavina del Rio T."/>
            <person name="Dalin E."/>
            <person name="Tice H."/>
            <person name="Bruce D."/>
            <person name="Goodwin L."/>
            <person name="Pitluck S."/>
            <person name="Kiss H."/>
            <person name="Brettin T."/>
            <person name="Detter J.C."/>
            <person name="Han C."/>
            <person name="Kuske C.R."/>
            <person name="Schmutz J."/>
            <person name="Larimer F."/>
            <person name="Land M."/>
            <person name="Hauser L."/>
            <person name="Kyrpides N."/>
            <person name="Mikhailova N."/>
            <person name="Ingram L."/>
            <person name="Richardson P."/>
        </authorList>
    </citation>
    <scope>NUCLEOTIDE SEQUENCE [LARGE SCALE GENOMIC DNA]</scope>
    <source>
        <strain>ATCC 8739 / DSM 1576 / NBRC 3972 / NCIMB 8545 / WDCM 00012 / Crooks</strain>
    </source>
</reference>
<accession>B1IUL3</accession>
<evidence type="ECO:0000255" key="1">
    <source>
        <dbReference type="HAMAP-Rule" id="MF_01632"/>
    </source>
</evidence>
<gene>
    <name evidence="1" type="primary">ubiC</name>
    <name type="ordered locus">EcolC_3989</name>
</gene>
<name>UBIC_ECOLC</name>
<feature type="chain" id="PRO_1000088145" description="Chorismate pyruvate-lyase">
    <location>
        <begin position="1"/>
        <end position="165"/>
    </location>
</feature>
<feature type="binding site" evidence="1">
    <location>
        <position position="35"/>
    </location>
    <ligand>
        <name>substrate</name>
    </ligand>
</feature>
<feature type="binding site" evidence="1">
    <location>
        <position position="77"/>
    </location>
    <ligand>
        <name>substrate</name>
    </ligand>
</feature>
<feature type="binding site" evidence="1">
    <location>
        <position position="115"/>
    </location>
    <ligand>
        <name>substrate</name>
    </ligand>
</feature>
<feature type="binding site" evidence="1">
    <location>
        <position position="156"/>
    </location>
    <ligand>
        <name>substrate</name>
    </ligand>
</feature>